<keyword id="KW-0028">Amino-acid biosynthesis</keyword>
<keyword id="KW-0170">Cobalt</keyword>
<keyword id="KW-0220">Diaminopimelate biosynthesis</keyword>
<keyword id="KW-0378">Hydrolase</keyword>
<keyword id="KW-0457">Lysine biosynthesis</keyword>
<keyword id="KW-0479">Metal-binding</keyword>
<keyword id="KW-1185">Reference proteome</keyword>
<keyword id="KW-0862">Zinc</keyword>
<accession>Q1QH74</accession>
<comment type="function">
    <text evidence="1">Catalyzes the hydrolysis of N-succinyl-L,L-diaminopimelic acid (SDAP), forming succinate and LL-2,6-diaminopimelate (DAP), an intermediate involved in the bacterial biosynthesis of lysine and meso-diaminopimelic acid, an essential component of bacterial cell walls.</text>
</comment>
<comment type="catalytic activity">
    <reaction evidence="1">
        <text>N-succinyl-(2S,6S)-2,6-diaminopimelate + H2O = (2S,6S)-2,6-diaminopimelate + succinate</text>
        <dbReference type="Rhea" id="RHEA:22608"/>
        <dbReference type="ChEBI" id="CHEBI:15377"/>
        <dbReference type="ChEBI" id="CHEBI:30031"/>
        <dbReference type="ChEBI" id="CHEBI:57609"/>
        <dbReference type="ChEBI" id="CHEBI:58087"/>
        <dbReference type="EC" id="3.5.1.18"/>
    </reaction>
</comment>
<comment type="cofactor">
    <cofactor evidence="1">
        <name>Zn(2+)</name>
        <dbReference type="ChEBI" id="CHEBI:29105"/>
    </cofactor>
    <cofactor evidence="1">
        <name>Co(2+)</name>
        <dbReference type="ChEBI" id="CHEBI:48828"/>
    </cofactor>
    <text evidence="1">Binds 2 Zn(2+) or Co(2+) ions per subunit.</text>
</comment>
<comment type="pathway">
    <text evidence="1">Amino-acid biosynthesis; L-lysine biosynthesis via DAP pathway; LL-2,6-diaminopimelate from (S)-tetrahydrodipicolinate (succinylase route): step 3/3.</text>
</comment>
<comment type="subunit">
    <text evidence="1">Homodimer.</text>
</comment>
<comment type="similarity">
    <text evidence="1">Belongs to the peptidase M20A family. DapE subfamily.</text>
</comment>
<comment type="sequence caution" evidence="2">
    <conflict type="erroneous initiation">
        <sequence resource="EMBL-CDS" id="ABE64423"/>
    </conflict>
</comment>
<proteinExistence type="inferred from homology"/>
<dbReference type="EC" id="3.5.1.18" evidence="1"/>
<dbReference type="EMBL" id="CP000319">
    <property type="protein sequence ID" value="ABE64423.1"/>
    <property type="status" value="ALT_INIT"/>
    <property type="molecule type" value="Genomic_DNA"/>
</dbReference>
<dbReference type="RefSeq" id="WP_041358374.1">
    <property type="nucleotide sequence ID" value="NC_007964.1"/>
</dbReference>
<dbReference type="SMR" id="Q1QH74"/>
<dbReference type="STRING" id="323097.Nham_3697"/>
<dbReference type="KEGG" id="nha:Nham_3697"/>
<dbReference type="eggNOG" id="COG0624">
    <property type="taxonomic scope" value="Bacteria"/>
</dbReference>
<dbReference type="HOGENOM" id="CLU_021802_4_0_5"/>
<dbReference type="OrthoDB" id="9809784at2"/>
<dbReference type="UniPathway" id="UPA00034">
    <property type="reaction ID" value="UER00021"/>
</dbReference>
<dbReference type="Proteomes" id="UP000001953">
    <property type="component" value="Chromosome"/>
</dbReference>
<dbReference type="GO" id="GO:0008777">
    <property type="term" value="F:acetylornithine deacetylase activity"/>
    <property type="evidence" value="ECO:0007669"/>
    <property type="project" value="TreeGrafter"/>
</dbReference>
<dbReference type="GO" id="GO:0050897">
    <property type="term" value="F:cobalt ion binding"/>
    <property type="evidence" value="ECO:0007669"/>
    <property type="project" value="UniProtKB-UniRule"/>
</dbReference>
<dbReference type="GO" id="GO:0009014">
    <property type="term" value="F:succinyl-diaminopimelate desuccinylase activity"/>
    <property type="evidence" value="ECO:0007669"/>
    <property type="project" value="UniProtKB-UniRule"/>
</dbReference>
<dbReference type="GO" id="GO:0008270">
    <property type="term" value="F:zinc ion binding"/>
    <property type="evidence" value="ECO:0007669"/>
    <property type="project" value="UniProtKB-UniRule"/>
</dbReference>
<dbReference type="GO" id="GO:0019877">
    <property type="term" value="P:diaminopimelate biosynthetic process"/>
    <property type="evidence" value="ECO:0007669"/>
    <property type="project" value="UniProtKB-UniRule"/>
</dbReference>
<dbReference type="GO" id="GO:0006526">
    <property type="term" value="P:L-arginine biosynthetic process"/>
    <property type="evidence" value="ECO:0007669"/>
    <property type="project" value="TreeGrafter"/>
</dbReference>
<dbReference type="GO" id="GO:0009089">
    <property type="term" value="P:lysine biosynthetic process via diaminopimelate"/>
    <property type="evidence" value="ECO:0007669"/>
    <property type="project" value="UniProtKB-UniRule"/>
</dbReference>
<dbReference type="CDD" id="cd03891">
    <property type="entry name" value="M20_DapE_proteobac"/>
    <property type="match status" value="1"/>
</dbReference>
<dbReference type="Gene3D" id="3.40.630.10">
    <property type="entry name" value="Zn peptidases"/>
    <property type="match status" value="2"/>
</dbReference>
<dbReference type="HAMAP" id="MF_01690">
    <property type="entry name" value="DapE"/>
    <property type="match status" value="1"/>
</dbReference>
<dbReference type="InterPro" id="IPR001261">
    <property type="entry name" value="ArgE/DapE_CS"/>
</dbReference>
<dbReference type="InterPro" id="IPR036264">
    <property type="entry name" value="Bact_exopeptidase_dim_dom"/>
</dbReference>
<dbReference type="InterPro" id="IPR005941">
    <property type="entry name" value="DapE_proteobac"/>
</dbReference>
<dbReference type="InterPro" id="IPR002933">
    <property type="entry name" value="Peptidase_M20"/>
</dbReference>
<dbReference type="InterPro" id="IPR011650">
    <property type="entry name" value="Peptidase_M20_dimer"/>
</dbReference>
<dbReference type="InterPro" id="IPR050072">
    <property type="entry name" value="Peptidase_M20A"/>
</dbReference>
<dbReference type="NCBIfam" id="TIGR01246">
    <property type="entry name" value="dapE_proteo"/>
    <property type="match status" value="1"/>
</dbReference>
<dbReference type="NCBIfam" id="NF009557">
    <property type="entry name" value="PRK13009.1"/>
    <property type="match status" value="1"/>
</dbReference>
<dbReference type="PANTHER" id="PTHR43808">
    <property type="entry name" value="ACETYLORNITHINE DEACETYLASE"/>
    <property type="match status" value="1"/>
</dbReference>
<dbReference type="PANTHER" id="PTHR43808:SF31">
    <property type="entry name" value="N-ACETYL-L-CITRULLINE DEACETYLASE"/>
    <property type="match status" value="1"/>
</dbReference>
<dbReference type="Pfam" id="PF07687">
    <property type="entry name" value="M20_dimer"/>
    <property type="match status" value="1"/>
</dbReference>
<dbReference type="Pfam" id="PF01546">
    <property type="entry name" value="Peptidase_M20"/>
    <property type="match status" value="1"/>
</dbReference>
<dbReference type="SUPFAM" id="SSF55031">
    <property type="entry name" value="Bacterial exopeptidase dimerisation domain"/>
    <property type="match status" value="1"/>
</dbReference>
<dbReference type="SUPFAM" id="SSF53187">
    <property type="entry name" value="Zn-dependent exopeptidases"/>
    <property type="match status" value="1"/>
</dbReference>
<dbReference type="PROSITE" id="PS00758">
    <property type="entry name" value="ARGE_DAPE_CPG2_1"/>
    <property type="match status" value="1"/>
</dbReference>
<sequence>MATDALSIARDLVRCPSVTPADAGALGVLEKLLGDAGFEVHRVTFSEPGAADIDNLYARIGATGPHIAFAGHTDVVPPGDESAWTHGAFSGEVKDGFLYGRGTVDMKGGIACSAAATLEYLEAHGGRPGKDGNGSISFLITGDEEDIAVNGTVKLMQWAAARGEKFDHCVLGEPSNVAELGDCIKIGRRGSQSGTLYVEGVQGHVAYPHRASNPIPDIAALITALVSEPLDQGSAQFQPSNLAFTSVDVGNPANNVIPGQARAKFNVRFNDHHNQESLRALIEARVAKVSGNRIRTRIVWEPSNADVFVTRPGPFTDLVVAAIEEVTGRRPELNTGGGTSDARFIKDYCPVIEFGLVGQTMHQIDERAPVADLEKLTRIYHGVLDRYFA</sequence>
<reference key="1">
    <citation type="submission" date="2006-03" db="EMBL/GenBank/DDBJ databases">
        <title>Complete sequence of chromosome of Nitrobacter hamburgensis X14.</title>
        <authorList>
            <consortium name="US DOE Joint Genome Institute"/>
            <person name="Copeland A."/>
            <person name="Lucas S."/>
            <person name="Lapidus A."/>
            <person name="Barry K."/>
            <person name="Detter J.C."/>
            <person name="Glavina del Rio T."/>
            <person name="Hammon N."/>
            <person name="Israni S."/>
            <person name="Dalin E."/>
            <person name="Tice H."/>
            <person name="Pitluck S."/>
            <person name="Chain P."/>
            <person name="Malfatti S."/>
            <person name="Shin M."/>
            <person name="Vergez L."/>
            <person name="Schmutz J."/>
            <person name="Larimer F."/>
            <person name="Land M."/>
            <person name="Hauser L."/>
            <person name="Kyrpides N."/>
            <person name="Ivanova N."/>
            <person name="Ward B."/>
            <person name="Arp D."/>
            <person name="Klotz M."/>
            <person name="Stein L."/>
            <person name="O'Mullan G."/>
            <person name="Starkenburg S."/>
            <person name="Sayavedra L."/>
            <person name="Poret-Peterson A.T."/>
            <person name="Gentry M.E."/>
            <person name="Bruce D."/>
            <person name="Richardson P."/>
        </authorList>
    </citation>
    <scope>NUCLEOTIDE SEQUENCE [LARGE SCALE GENOMIC DNA]</scope>
    <source>
        <strain>DSM 10229 / NCIMB 13809 / X14</strain>
    </source>
</reference>
<name>DAPE_NITHX</name>
<evidence type="ECO:0000255" key="1">
    <source>
        <dbReference type="HAMAP-Rule" id="MF_01690"/>
    </source>
</evidence>
<evidence type="ECO:0000305" key="2"/>
<gene>
    <name evidence="1" type="primary">dapE</name>
    <name type="ordered locus">Nham_3697</name>
</gene>
<organism>
    <name type="scientific">Nitrobacter hamburgensis (strain DSM 10229 / NCIMB 13809 / X14)</name>
    <dbReference type="NCBI Taxonomy" id="323097"/>
    <lineage>
        <taxon>Bacteria</taxon>
        <taxon>Pseudomonadati</taxon>
        <taxon>Pseudomonadota</taxon>
        <taxon>Alphaproteobacteria</taxon>
        <taxon>Hyphomicrobiales</taxon>
        <taxon>Nitrobacteraceae</taxon>
        <taxon>Nitrobacter</taxon>
    </lineage>
</organism>
<feature type="chain" id="PRO_0000375628" description="Succinyl-diaminopimelate desuccinylase">
    <location>
        <begin position="1"/>
        <end position="389"/>
    </location>
</feature>
<feature type="active site" evidence="1">
    <location>
        <position position="74"/>
    </location>
</feature>
<feature type="active site" description="Proton acceptor" evidence="1">
    <location>
        <position position="144"/>
    </location>
</feature>
<feature type="binding site" evidence="1">
    <location>
        <position position="72"/>
    </location>
    <ligand>
        <name>Zn(2+)</name>
        <dbReference type="ChEBI" id="CHEBI:29105"/>
        <label>1</label>
    </ligand>
</feature>
<feature type="binding site" evidence="1">
    <location>
        <position position="105"/>
    </location>
    <ligand>
        <name>Zn(2+)</name>
        <dbReference type="ChEBI" id="CHEBI:29105"/>
        <label>1</label>
    </ligand>
</feature>
<feature type="binding site" evidence="1">
    <location>
        <position position="105"/>
    </location>
    <ligand>
        <name>Zn(2+)</name>
        <dbReference type="ChEBI" id="CHEBI:29105"/>
        <label>2</label>
    </ligand>
</feature>
<feature type="binding site" evidence="1">
    <location>
        <position position="145"/>
    </location>
    <ligand>
        <name>Zn(2+)</name>
        <dbReference type="ChEBI" id="CHEBI:29105"/>
        <label>2</label>
    </ligand>
</feature>
<feature type="binding site" evidence="1">
    <location>
        <position position="173"/>
    </location>
    <ligand>
        <name>Zn(2+)</name>
        <dbReference type="ChEBI" id="CHEBI:29105"/>
        <label>1</label>
    </ligand>
</feature>
<feature type="binding site" evidence="1">
    <location>
        <position position="362"/>
    </location>
    <ligand>
        <name>Zn(2+)</name>
        <dbReference type="ChEBI" id="CHEBI:29105"/>
        <label>2</label>
    </ligand>
</feature>
<protein>
    <recommendedName>
        <fullName evidence="1">Succinyl-diaminopimelate desuccinylase</fullName>
        <shortName evidence="1">SDAP desuccinylase</shortName>
        <ecNumber evidence="1">3.5.1.18</ecNumber>
    </recommendedName>
    <alternativeName>
        <fullName evidence="1">N-succinyl-LL-2,6-diaminoheptanedioate amidohydrolase</fullName>
    </alternativeName>
</protein>